<evidence type="ECO:0000255" key="1"/>
<evidence type="ECO:0000255" key="2">
    <source>
        <dbReference type="PROSITE-ProRule" id="PRU00711"/>
    </source>
</evidence>
<evidence type="ECO:0000269" key="3">
    <source>
    </source>
</evidence>
<evidence type="ECO:0000269" key="4">
    <source>
    </source>
</evidence>
<evidence type="ECO:0000269" key="5">
    <source>
    </source>
</evidence>
<evidence type="ECO:0000305" key="6"/>
<sequence length="287" mass="31874">MANRKRDAGREALEKKGWWRSHRWLVLRRLCQFFVLGMFLSGPWFGVWILHGNYSSSLLFDTVPLTDPLMTLQSLASGHLPATVALTGAVIITVLYALAGKRLFCSWVCPLNPITDLANWLRRRFDLNQSATIPRHIRYVLLVVILVGSALTGTLIWEWINPVSLMGRSLVMGFGSGALLILALFLFDLLVVEHGWCGHICPVGALYGVLGSKGVITVAATDRQKCNRCMDCFHVCPEPHVLRAPVLDEQSPVQVTSRDCMTCGRCVDVCSEDVFTITTRWSSGAKS</sequence>
<comment type="function">
    <text evidence="3 4">Required for electron transfer from ubiquinol, via NapC, to the periplasmic nitrate reductase NapAB complex.</text>
</comment>
<comment type="cofactor">
    <cofactor evidence="2">
        <name>[4Fe-4S] cluster</name>
        <dbReference type="ChEBI" id="CHEBI:49883"/>
    </cofactor>
    <text evidence="2">Binds 2 [4Fe-4S] cluster.</text>
</comment>
<comment type="subunit">
    <text evidence="4">Interacts with NapC.</text>
</comment>
<comment type="subcellular location">
    <subcellularLocation>
        <location evidence="4 5">Cell inner membrane</location>
        <topology evidence="4">Multi-pass membrane protein</topology>
    </subcellularLocation>
</comment>
<comment type="disruption phenotype">
    <text evidence="3">Deletion of both napG and napH genes has little effect on the overall rate of nitrate reduction during growth in the glycerol/nitrate medium. However, during growth in the glucose/nitrate medium, the double mutant shows a decreased rate of electron transfer that correlates with decreased NapAB activity.</text>
</comment>
<keyword id="KW-0004">4Fe-4S</keyword>
<keyword id="KW-0997">Cell inner membrane</keyword>
<keyword id="KW-1003">Cell membrane</keyword>
<keyword id="KW-0249">Electron transport</keyword>
<keyword id="KW-0408">Iron</keyword>
<keyword id="KW-0411">Iron-sulfur</keyword>
<keyword id="KW-0472">Membrane</keyword>
<keyword id="KW-0479">Metal-binding</keyword>
<keyword id="KW-1185">Reference proteome</keyword>
<keyword id="KW-0677">Repeat</keyword>
<keyword id="KW-0812">Transmembrane</keyword>
<keyword id="KW-1133">Transmembrane helix</keyword>
<keyword id="KW-0813">Transport</keyword>
<accession>P33934</accession>
<accession>Q2MAN9</accession>
<name>NAPH_ECOLI</name>
<reference key="1">
    <citation type="submission" date="1993-10" db="EMBL/GenBank/DDBJ databases">
        <title>Automated multiplex sequencing of the E.coli genome.</title>
        <authorList>
            <person name="Richterich P."/>
            <person name="Lakey N."/>
            <person name="Gryan G."/>
            <person name="Jaehn L."/>
            <person name="Mintz L."/>
            <person name="Robison K."/>
            <person name="Church G.M."/>
        </authorList>
    </citation>
    <scope>NUCLEOTIDE SEQUENCE [LARGE SCALE GENOMIC DNA]</scope>
    <source>
        <strain>K12 / BHB2600</strain>
    </source>
</reference>
<reference key="2">
    <citation type="journal article" date="1997" name="Science">
        <title>The complete genome sequence of Escherichia coli K-12.</title>
        <authorList>
            <person name="Blattner F.R."/>
            <person name="Plunkett G. III"/>
            <person name="Bloch C.A."/>
            <person name="Perna N.T."/>
            <person name="Burland V."/>
            <person name="Riley M."/>
            <person name="Collado-Vides J."/>
            <person name="Glasner J.D."/>
            <person name="Rode C.K."/>
            <person name="Mayhew G.F."/>
            <person name="Gregor J."/>
            <person name="Davis N.W."/>
            <person name="Kirkpatrick H.A."/>
            <person name="Goeden M.A."/>
            <person name="Rose D.J."/>
            <person name="Mau B."/>
            <person name="Shao Y."/>
        </authorList>
    </citation>
    <scope>NUCLEOTIDE SEQUENCE [LARGE SCALE GENOMIC DNA]</scope>
    <source>
        <strain>K12 / MG1655 / ATCC 47076</strain>
    </source>
</reference>
<reference key="3">
    <citation type="journal article" date="2006" name="Mol. Syst. Biol.">
        <title>Highly accurate genome sequences of Escherichia coli K-12 strains MG1655 and W3110.</title>
        <authorList>
            <person name="Hayashi K."/>
            <person name="Morooka N."/>
            <person name="Yamamoto Y."/>
            <person name="Fujita K."/>
            <person name="Isono K."/>
            <person name="Choi S."/>
            <person name="Ohtsubo E."/>
            <person name="Baba T."/>
            <person name="Wanner B.L."/>
            <person name="Mori H."/>
            <person name="Horiuchi T."/>
        </authorList>
    </citation>
    <scope>NUCLEOTIDE SEQUENCE [LARGE SCALE GENOMIC DNA]</scope>
    <source>
        <strain>K12 / W3110 / ATCC 27325 / DSM 5911</strain>
    </source>
</reference>
<reference key="4">
    <citation type="journal article" date="2002" name="Mol. Microbiol.">
        <title>Roles of NapF, NapG and NapH, subunits of the Escherichia coli periplasmic nitrate reductase, in ubiquinol oxidation.</title>
        <authorList>
            <person name="Brondijk T.H."/>
            <person name="Fiegen D."/>
            <person name="Richardson D.J."/>
            <person name="Cole J.A."/>
        </authorList>
    </citation>
    <scope>FUNCTION</scope>
    <scope>DISRUPTION PHENOTYPE</scope>
</reference>
<reference key="5">
    <citation type="journal article" date="2004" name="Biochem. J.">
        <title>NapGH components of the periplasmic nitrate reductase of Escherichia coli K-12: location, topology and physiological roles in quinol oxidation and redox balancing.</title>
        <authorList>
            <person name="Brondijk T.H."/>
            <person name="Nilavongse A."/>
            <person name="Filenko N."/>
            <person name="Richardson D.J."/>
            <person name="Cole J.A."/>
        </authorList>
    </citation>
    <scope>FUNCTION</scope>
    <scope>INTERACTION WITH NAPC</scope>
    <scope>SUBCELLULAR LOCATION</scope>
    <scope>TOPOLOGY</scope>
</reference>
<reference key="6">
    <citation type="journal article" date="2005" name="Science">
        <title>Global topology analysis of the Escherichia coli inner membrane proteome.</title>
        <authorList>
            <person name="Daley D.O."/>
            <person name="Rapp M."/>
            <person name="Granseth E."/>
            <person name="Melen K."/>
            <person name="Drew D."/>
            <person name="von Heijne G."/>
        </authorList>
    </citation>
    <scope>SUBCELLULAR LOCATION</scope>
    <source>
        <strain>K12 / MG1655 / ATCC 47076</strain>
    </source>
</reference>
<proteinExistence type="evidence at protein level"/>
<organism>
    <name type="scientific">Escherichia coli (strain K12)</name>
    <dbReference type="NCBI Taxonomy" id="83333"/>
    <lineage>
        <taxon>Bacteria</taxon>
        <taxon>Pseudomonadati</taxon>
        <taxon>Pseudomonadota</taxon>
        <taxon>Gammaproteobacteria</taxon>
        <taxon>Enterobacterales</taxon>
        <taxon>Enterobacteriaceae</taxon>
        <taxon>Escherichia</taxon>
    </lineage>
</organism>
<dbReference type="EMBL" id="U00008">
    <property type="protein sequence ID" value="AAA16396.1"/>
    <property type="molecule type" value="Genomic_DNA"/>
</dbReference>
<dbReference type="EMBL" id="U00096">
    <property type="protein sequence ID" value="AAC75264.1"/>
    <property type="molecule type" value="Genomic_DNA"/>
</dbReference>
<dbReference type="EMBL" id="AP009048">
    <property type="protein sequence ID" value="BAE76667.1"/>
    <property type="molecule type" value="Genomic_DNA"/>
</dbReference>
<dbReference type="PIR" id="B64990">
    <property type="entry name" value="B64990"/>
</dbReference>
<dbReference type="RefSeq" id="NP_416708.1">
    <property type="nucleotide sequence ID" value="NC_000913.3"/>
</dbReference>
<dbReference type="RefSeq" id="WP_000013515.1">
    <property type="nucleotide sequence ID" value="NZ_STEB01000002.1"/>
</dbReference>
<dbReference type="BioGRID" id="4262223">
    <property type="interactions" value="14"/>
</dbReference>
<dbReference type="DIP" id="DIP-10310N"/>
<dbReference type="FunCoup" id="P33934">
    <property type="interactions" value="29"/>
</dbReference>
<dbReference type="IntAct" id="P33934">
    <property type="interactions" value="2"/>
</dbReference>
<dbReference type="STRING" id="511145.b2204"/>
<dbReference type="TCDB" id="3.D.11.1.1">
    <property type="family name" value="the periplasmic nitrate reductase complex (nap) complex family"/>
</dbReference>
<dbReference type="jPOST" id="P33934"/>
<dbReference type="PaxDb" id="511145-b2204"/>
<dbReference type="EnsemblBacteria" id="AAC75264">
    <property type="protein sequence ID" value="AAC75264"/>
    <property type="gene ID" value="b2204"/>
</dbReference>
<dbReference type="GeneID" id="945984"/>
<dbReference type="KEGG" id="ecj:JW2192"/>
<dbReference type="KEGG" id="eco:b2204"/>
<dbReference type="KEGG" id="ecoc:C3026_12315"/>
<dbReference type="PATRIC" id="fig|1411691.4.peg.32"/>
<dbReference type="EchoBASE" id="EB1992"/>
<dbReference type="eggNOG" id="COG0348">
    <property type="taxonomic scope" value="Bacteria"/>
</dbReference>
<dbReference type="HOGENOM" id="CLU_066585_1_0_6"/>
<dbReference type="InParanoid" id="P33934"/>
<dbReference type="OMA" id="YNVCPEP"/>
<dbReference type="OrthoDB" id="9806398at2"/>
<dbReference type="PhylomeDB" id="P33934"/>
<dbReference type="BioCyc" id="EcoCyc:NAPH-MONOMER"/>
<dbReference type="BioCyc" id="MetaCyc:NAPH-MONOMER"/>
<dbReference type="PHI-base" id="PHI:10524"/>
<dbReference type="PRO" id="PR:P33934"/>
<dbReference type="Proteomes" id="UP000000625">
    <property type="component" value="Chromosome"/>
</dbReference>
<dbReference type="GO" id="GO:0016020">
    <property type="term" value="C:membrane"/>
    <property type="evidence" value="ECO:0000314"/>
    <property type="project" value="EcoliWiki"/>
</dbReference>
<dbReference type="GO" id="GO:0005886">
    <property type="term" value="C:plasma membrane"/>
    <property type="evidence" value="ECO:0000314"/>
    <property type="project" value="EcoCyc"/>
</dbReference>
<dbReference type="GO" id="GO:0051539">
    <property type="term" value="F:4 iron, 4 sulfur cluster binding"/>
    <property type="evidence" value="ECO:0007669"/>
    <property type="project" value="UniProtKB-KW"/>
</dbReference>
<dbReference type="GO" id="GO:0046872">
    <property type="term" value="F:metal ion binding"/>
    <property type="evidence" value="ECO:0007669"/>
    <property type="project" value="UniProtKB-KW"/>
</dbReference>
<dbReference type="Gene3D" id="3.30.70.20">
    <property type="match status" value="1"/>
</dbReference>
<dbReference type="InterPro" id="IPR017896">
    <property type="entry name" value="4Fe4S_Fe-S-bd"/>
</dbReference>
<dbReference type="InterPro" id="IPR017900">
    <property type="entry name" value="4Fe4S_Fe_S_CS"/>
</dbReference>
<dbReference type="InterPro" id="IPR051684">
    <property type="entry name" value="Electron_Trans/Redox"/>
</dbReference>
<dbReference type="InterPro" id="IPR011886">
    <property type="entry name" value="NapH_MauN"/>
</dbReference>
<dbReference type="NCBIfam" id="TIGR02163">
    <property type="entry name" value="napH"/>
    <property type="match status" value="1"/>
</dbReference>
<dbReference type="NCBIfam" id="NF007013">
    <property type="entry name" value="PRK09477.1"/>
    <property type="match status" value="1"/>
</dbReference>
<dbReference type="PANTHER" id="PTHR30176">
    <property type="entry name" value="FERREDOXIN-TYPE PROTEIN NAPH"/>
    <property type="match status" value="1"/>
</dbReference>
<dbReference type="PANTHER" id="PTHR30176:SF3">
    <property type="entry name" value="FERREDOXIN-TYPE PROTEIN NAPH"/>
    <property type="match status" value="1"/>
</dbReference>
<dbReference type="Pfam" id="PF13237">
    <property type="entry name" value="Fer4_10"/>
    <property type="match status" value="1"/>
</dbReference>
<dbReference type="Pfam" id="PF12801">
    <property type="entry name" value="Fer4_5"/>
    <property type="match status" value="2"/>
</dbReference>
<dbReference type="SUPFAM" id="SSF54862">
    <property type="entry name" value="4Fe-4S ferredoxins"/>
    <property type="match status" value="1"/>
</dbReference>
<dbReference type="PROSITE" id="PS00198">
    <property type="entry name" value="4FE4S_FER_1"/>
    <property type="match status" value="1"/>
</dbReference>
<dbReference type="PROSITE" id="PS51379">
    <property type="entry name" value="4FE4S_FER_2"/>
    <property type="match status" value="2"/>
</dbReference>
<feature type="chain" id="PRO_0000159283" description="Ferredoxin-type protein NapH">
    <location>
        <begin position="1"/>
        <end position="287"/>
    </location>
</feature>
<feature type="topological domain" description="Cytoplasmic" evidence="4">
    <location>
        <begin position="1"/>
        <end position="29"/>
    </location>
</feature>
<feature type="transmembrane region" description="Helical" evidence="1">
    <location>
        <begin position="30"/>
        <end position="50"/>
    </location>
</feature>
<feature type="topological domain" description="Periplasmic" evidence="4">
    <location>
        <begin position="51"/>
        <end position="79"/>
    </location>
</feature>
<feature type="transmembrane region" description="Helical" evidence="1">
    <location>
        <begin position="80"/>
        <end position="100"/>
    </location>
</feature>
<feature type="topological domain" description="Cytoplasmic" evidence="4">
    <location>
        <begin position="101"/>
        <end position="139"/>
    </location>
</feature>
<feature type="transmembrane region" description="Helical" evidence="1">
    <location>
        <begin position="140"/>
        <end position="160"/>
    </location>
</feature>
<feature type="topological domain" description="Periplasmic" evidence="4">
    <location>
        <begin position="161"/>
        <end position="170"/>
    </location>
</feature>
<feature type="transmembrane region" description="Helical" evidence="1">
    <location>
        <begin position="171"/>
        <end position="191"/>
    </location>
</feature>
<feature type="topological domain" description="Cytoplasmic" evidence="4">
    <location>
        <begin position="192"/>
        <end position="287"/>
    </location>
</feature>
<feature type="domain" description="4Fe-4S ferredoxin-type 1" evidence="2">
    <location>
        <begin position="217"/>
        <end position="247"/>
    </location>
</feature>
<feature type="domain" description="4Fe-4S ferredoxin-type 2" evidence="2">
    <location>
        <begin position="251"/>
        <end position="280"/>
    </location>
</feature>
<feature type="binding site" evidence="2">
    <location>
        <position position="226"/>
    </location>
    <ligand>
        <name>[4Fe-4S] cluster</name>
        <dbReference type="ChEBI" id="CHEBI:49883"/>
        <label>1</label>
    </ligand>
</feature>
<feature type="binding site" evidence="2">
    <location>
        <position position="229"/>
    </location>
    <ligand>
        <name>[4Fe-4S] cluster</name>
        <dbReference type="ChEBI" id="CHEBI:49883"/>
        <label>1</label>
    </ligand>
</feature>
<feature type="binding site" evidence="2">
    <location>
        <position position="232"/>
    </location>
    <ligand>
        <name>[4Fe-4S] cluster</name>
        <dbReference type="ChEBI" id="CHEBI:49883"/>
        <label>1</label>
    </ligand>
</feature>
<feature type="binding site" evidence="2">
    <location>
        <position position="236"/>
    </location>
    <ligand>
        <name>[4Fe-4S] cluster</name>
        <dbReference type="ChEBI" id="CHEBI:49883"/>
        <label>1</label>
    </ligand>
</feature>
<feature type="binding site" evidence="2">
    <location>
        <position position="260"/>
    </location>
    <ligand>
        <name>[4Fe-4S] cluster</name>
        <dbReference type="ChEBI" id="CHEBI:49883"/>
        <label>2</label>
    </ligand>
</feature>
<feature type="binding site" evidence="2">
    <location>
        <position position="263"/>
    </location>
    <ligand>
        <name>[4Fe-4S] cluster</name>
        <dbReference type="ChEBI" id="CHEBI:49883"/>
        <label>2</label>
    </ligand>
</feature>
<feature type="binding site" evidence="2">
    <location>
        <position position="266"/>
    </location>
    <ligand>
        <name>[4Fe-4S] cluster</name>
        <dbReference type="ChEBI" id="CHEBI:49883"/>
        <label>2</label>
    </ligand>
</feature>
<feature type="binding site" evidence="2">
    <location>
        <position position="270"/>
    </location>
    <ligand>
        <name>[4Fe-4S] cluster</name>
        <dbReference type="ChEBI" id="CHEBI:49883"/>
        <label>2</label>
    </ligand>
</feature>
<protein>
    <recommendedName>
        <fullName evidence="6">Ferredoxin-type protein NapH</fullName>
    </recommendedName>
    <alternativeName>
        <fullName evidence="6">Ubiquinol--[NapC cytochrome c] reductase NapH subunit</fullName>
    </alternativeName>
</protein>
<gene>
    <name type="primary">napH</name>
    <name type="synonym">yejZ</name>
    <name type="ordered locus">b2204</name>
    <name type="ordered locus">JW2192</name>
</gene>